<feature type="chain" id="PRO_1000116242" description="Adenine phosphoribosyltransferase">
    <location>
        <begin position="1"/>
        <end position="183"/>
    </location>
</feature>
<keyword id="KW-0963">Cytoplasm</keyword>
<keyword id="KW-0328">Glycosyltransferase</keyword>
<keyword id="KW-0660">Purine salvage</keyword>
<keyword id="KW-1185">Reference proteome</keyword>
<keyword id="KW-0808">Transferase</keyword>
<dbReference type="EC" id="2.4.2.7" evidence="1"/>
<dbReference type="EMBL" id="CU928145">
    <property type="protein sequence ID" value="CAU96355.1"/>
    <property type="molecule type" value="Genomic_DNA"/>
</dbReference>
<dbReference type="RefSeq" id="WP_000127356.1">
    <property type="nucleotide sequence ID" value="NZ_CP028304.1"/>
</dbReference>
<dbReference type="SMR" id="B7L794"/>
<dbReference type="GeneID" id="93776981"/>
<dbReference type="KEGG" id="eck:EC55989_0482"/>
<dbReference type="HOGENOM" id="CLU_063339_3_0_6"/>
<dbReference type="UniPathway" id="UPA00588">
    <property type="reaction ID" value="UER00646"/>
</dbReference>
<dbReference type="Proteomes" id="UP000000746">
    <property type="component" value="Chromosome"/>
</dbReference>
<dbReference type="GO" id="GO:0005737">
    <property type="term" value="C:cytoplasm"/>
    <property type="evidence" value="ECO:0007669"/>
    <property type="project" value="UniProtKB-SubCell"/>
</dbReference>
<dbReference type="GO" id="GO:0002055">
    <property type="term" value="F:adenine binding"/>
    <property type="evidence" value="ECO:0007669"/>
    <property type="project" value="TreeGrafter"/>
</dbReference>
<dbReference type="GO" id="GO:0003999">
    <property type="term" value="F:adenine phosphoribosyltransferase activity"/>
    <property type="evidence" value="ECO:0007669"/>
    <property type="project" value="UniProtKB-UniRule"/>
</dbReference>
<dbReference type="GO" id="GO:0016208">
    <property type="term" value="F:AMP binding"/>
    <property type="evidence" value="ECO:0007669"/>
    <property type="project" value="TreeGrafter"/>
</dbReference>
<dbReference type="GO" id="GO:0006168">
    <property type="term" value="P:adenine salvage"/>
    <property type="evidence" value="ECO:0007669"/>
    <property type="project" value="InterPro"/>
</dbReference>
<dbReference type="GO" id="GO:0044209">
    <property type="term" value="P:AMP salvage"/>
    <property type="evidence" value="ECO:0007669"/>
    <property type="project" value="UniProtKB-UniRule"/>
</dbReference>
<dbReference type="GO" id="GO:0006166">
    <property type="term" value="P:purine ribonucleoside salvage"/>
    <property type="evidence" value="ECO:0007669"/>
    <property type="project" value="UniProtKB-KW"/>
</dbReference>
<dbReference type="CDD" id="cd06223">
    <property type="entry name" value="PRTases_typeI"/>
    <property type="match status" value="1"/>
</dbReference>
<dbReference type="FunFam" id="3.40.50.2020:FF:000004">
    <property type="entry name" value="Adenine phosphoribosyltransferase"/>
    <property type="match status" value="1"/>
</dbReference>
<dbReference type="Gene3D" id="3.40.50.2020">
    <property type="match status" value="1"/>
</dbReference>
<dbReference type="HAMAP" id="MF_00004">
    <property type="entry name" value="Aden_phosphoribosyltr"/>
    <property type="match status" value="1"/>
</dbReference>
<dbReference type="InterPro" id="IPR005764">
    <property type="entry name" value="Ade_phspho_trans"/>
</dbReference>
<dbReference type="InterPro" id="IPR000836">
    <property type="entry name" value="PRibTrfase_dom"/>
</dbReference>
<dbReference type="InterPro" id="IPR029057">
    <property type="entry name" value="PRTase-like"/>
</dbReference>
<dbReference type="InterPro" id="IPR050054">
    <property type="entry name" value="UPRTase/APRTase"/>
</dbReference>
<dbReference type="NCBIfam" id="TIGR01090">
    <property type="entry name" value="apt"/>
    <property type="match status" value="1"/>
</dbReference>
<dbReference type="NCBIfam" id="NF002632">
    <property type="entry name" value="PRK02304.1-1"/>
    <property type="match status" value="1"/>
</dbReference>
<dbReference type="NCBIfam" id="NF002633">
    <property type="entry name" value="PRK02304.1-2"/>
    <property type="match status" value="1"/>
</dbReference>
<dbReference type="NCBIfam" id="NF002634">
    <property type="entry name" value="PRK02304.1-3"/>
    <property type="match status" value="1"/>
</dbReference>
<dbReference type="NCBIfam" id="NF002636">
    <property type="entry name" value="PRK02304.1-5"/>
    <property type="match status" value="1"/>
</dbReference>
<dbReference type="PANTHER" id="PTHR32315">
    <property type="entry name" value="ADENINE PHOSPHORIBOSYLTRANSFERASE"/>
    <property type="match status" value="1"/>
</dbReference>
<dbReference type="PANTHER" id="PTHR32315:SF3">
    <property type="entry name" value="ADENINE PHOSPHORIBOSYLTRANSFERASE"/>
    <property type="match status" value="1"/>
</dbReference>
<dbReference type="Pfam" id="PF00156">
    <property type="entry name" value="Pribosyltran"/>
    <property type="match status" value="1"/>
</dbReference>
<dbReference type="SUPFAM" id="SSF53271">
    <property type="entry name" value="PRTase-like"/>
    <property type="match status" value="1"/>
</dbReference>
<dbReference type="PROSITE" id="PS00103">
    <property type="entry name" value="PUR_PYR_PR_TRANSFER"/>
    <property type="match status" value="1"/>
</dbReference>
<gene>
    <name evidence="1" type="primary">apt</name>
    <name type="ordered locus">EC55989_0482</name>
</gene>
<sequence>MTATAQQLEYLKNSIKSIQDYPKPGILFRDVTSLLEDPKAYALSIDLLVERYKNAGITKVVGTEARGFLFGAPVALGLGVGFVPVRKPGKLPRETISETYDLEYGTDQLEIHVDAIKPGDKVLVVDDLLATGGTIEATVKLIRRLGGEVADAAFIINLFDLGGEQRLEKQGITSYSLVPFPGH</sequence>
<proteinExistence type="inferred from homology"/>
<reference key="1">
    <citation type="journal article" date="2009" name="PLoS Genet.">
        <title>Organised genome dynamics in the Escherichia coli species results in highly diverse adaptive paths.</title>
        <authorList>
            <person name="Touchon M."/>
            <person name="Hoede C."/>
            <person name="Tenaillon O."/>
            <person name="Barbe V."/>
            <person name="Baeriswyl S."/>
            <person name="Bidet P."/>
            <person name="Bingen E."/>
            <person name="Bonacorsi S."/>
            <person name="Bouchier C."/>
            <person name="Bouvet O."/>
            <person name="Calteau A."/>
            <person name="Chiapello H."/>
            <person name="Clermont O."/>
            <person name="Cruveiller S."/>
            <person name="Danchin A."/>
            <person name="Diard M."/>
            <person name="Dossat C."/>
            <person name="Karoui M.E."/>
            <person name="Frapy E."/>
            <person name="Garry L."/>
            <person name="Ghigo J.M."/>
            <person name="Gilles A.M."/>
            <person name="Johnson J."/>
            <person name="Le Bouguenec C."/>
            <person name="Lescat M."/>
            <person name="Mangenot S."/>
            <person name="Martinez-Jehanne V."/>
            <person name="Matic I."/>
            <person name="Nassif X."/>
            <person name="Oztas S."/>
            <person name="Petit M.A."/>
            <person name="Pichon C."/>
            <person name="Rouy Z."/>
            <person name="Ruf C.S."/>
            <person name="Schneider D."/>
            <person name="Tourret J."/>
            <person name="Vacherie B."/>
            <person name="Vallenet D."/>
            <person name="Medigue C."/>
            <person name="Rocha E.P.C."/>
            <person name="Denamur E."/>
        </authorList>
    </citation>
    <scope>NUCLEOTIDE SEQUENCE [LARGE SCALE GENOMIC DNA]</scope>
    <source>
        <strain>55989 / EAEC</strain>
    </source>
</reference>
<accession>B7L794</accession>
<name>APT_ECO55</name>
<comment type="function">
    <text evidence="1">Catalyzes a salvage reaction resulting in the formation of AMP, that is energically less costly than de novo synthesis.</text>
</comment>
<comment type="catalytic activity">
    <reaction evidence="1">
        <text>AMP + diphosphate = 5-phospho-alpha-D-ribose 1-diphosphate + adenine</text>
        <dbReference type="Rhea" id="RHEA:16609"/>
        <dbReference type="ChEBI" id="CHEBI:16708"/>
        <dbReference type="ChEBI" id="CHEBI:33019"/>
        <dbReference type="ChEBI" id="CHEBI:58017"/>
        <dbReference type="ChEBI" id="CHEBI:456215"/>
        <dbReference type="EC" id="2.4.2.7"/>
    </reaction>
</comment>
<comment type="pathway">
    <text evidence="1">Purine metabolism; AMP biosynthesis via salvage pathway; AMP from adenine: step 1/1.</text>
</comment>
<comment type="subunit">
    <text evidence="1">Homodimer.</text>
</comment>
<comment type="subcellular location">
    <subcellularLocation>
        <location evidence="1">Cytoplasm</location>
    </subcellularLocation>
</comment>
<comment type="similarity">
    <text evidence="1">Belongs to the purine/pyrimidine phosphoribosyltransferase family.</text>
</comment>
<protein>
    <recommendedName>
        <fullName evidence="1">Adenine phosphoribosyltransferase</fullName>
        <shortName evidence="1">APRT</shortName>
        <ecNumber evidence="1">2.4.2.7</ecNumber>
    </recommendedName>
</protein>
<evidence type="ECO:0000255" key="1">
    <source>
        <dbReference type="HAMAP-Rule" id="MF_00004"/>
    </source>
</evidence>
<organism>
    <name type="scientific">Escherichia coli (strain 55989 / EAEC)</name>
    <dbReference type="NCBI Taxonomy" id="585055"/>
    <lineage>
        <taxon>Bacteria</taxon>
        <taxon>Pseudomonadati</taxon>
        <taxon>Pseudomonadota</taxon>
        <taxon>Gammaproteobacteria</taxon>
        <taxon>Enterobacterales</taxon>
        <taxon>Enterobacteriaceae</taxon>
        <taxon>Escherichia</taxon>
    </lineage>
</organism>